<organism>
    <name type="scientific">Thermotoga maritima (strain ATCC 43589 / DSM 3109 / JCM 10099 / NBRC 100826 / MSB8)</name>
    <dbReference type="NCBI Taxonomy" id="243274"/>
    <lineage>
        <taxon>Bacteria</taxon>
        <taxon>Thermotogati</taxon>
        <taxon>Thermotogota</taxon>
        <taxon>Thermotogae</taxon>
        <taxon>Thermotogales</taxon>
        <taxon>Thermotogaceae</taxon>
        <taxon>Thermotoga</taxon>
    </lineage>
</organism>
<accession>Q9WYZ6</accession>
<reference key="1">
    <citation type="journal article" date="1999" name="Nature">
        <title>Evidence for lateral gene transfer between Archaea and Bacteria from genome sequence of Thermotoga maritima.</title>
        <authorList>
            <person name="Nelson K.E."/>
            <person name="Clayton R.A."/>
            <person name="Gill S.R."/>
            <person name="Gwinn M.L."/>
            <person name="Dodson R.J."/>
            <person name="Haft D.H."/>
            <person name="Hickey E.K."/>
            <person name="Peterson J.D."/>
            <person name="Nelson W.C."/>
            <person name="Ketchum K.A."/>
            <person name="McDonald L.A."/>
            <person name="Utterback T.R."/>
            <person name="Malek J.A."/>
            <person name="Linher K.D."/>
            <person name="Garrett M.M."/>
            <person name="Stewart A.M."/>
            <person name="Cotton M.D."/>
            <person name="Pratt M.S."/>
            <person name="Phillips C.A."/>
            <person name="Richardson D.L."/>
            <person name="Heidelberg J.F."/>
            <person name="Sutton G.G."/>
            <person name="Fleischmann R.D."/>
            <person name="Eisen J.A."/>
            <person name="White O."/>
            <person name="Salzberg S.L."/>
            <person name="Smith H.O."/>
            <person name="Venter J.C."/>
            <person name="Fraser C.M."/>
        </authorList>
    </citation>
    <scope>NUCLEOTIDE SEQUENCE [LARGE SCALE GENOMIC DNA]</scope>
    <source>
        <strain>ATCC 43589 / DSM 3109 / JCM 10099 / NBRC 100826 / MSB8</strain>
    </source>
</reference>
<protein>
    <recommendedName>
        <fullName evidence="1">RNA-binding protein Hfq</fullName>
    </recommendedName>
</protein>
<name>HFQ_THEMA</name>
<proteinExistence type="evidence at protein level"/>
<keyword id="KW-0002">3D-structure</keyword>
<keyword id="KW-1185">Reference proteome</keyword>
<keyword id="KW-0694">RNA-binding</keyword>
<keyword id="KW-0346">Stress response</keyword>
<evidence type="ECO:0000255" key="1">
    <source>
        <dbReference type="HAMAP-Rule" id="MF_00436"/>
    </source>
</evidence>
<evidence type="ECO:0000255" key="2">
    <source>
        <dbReference type="PROSITE-ProRule" id="PRU01346"/>
    </source>
</evidence>
<evidence type="ECO:0007829" key="3">
    <source>
        <dbReference type="PDB" id="4Y91"/>
    </source>
</evidence>
<comment type="function">
    <text evidence="1">RNA chaperone that binds small regulatory RNA (sRNAs) and mRNAs to facilitate mRNA translational regulation in response to envelope stress, environmental stress and changes in metabolite concentrations. Also binds with high specificity to tRNAs.</text>
</comment>
<comment type="subunit">
    <text evidence="1">Homohexamer.</text>
</comment>
<comment type="similarity">
    <text evidence="1">Belongs to the Hfq family.</text>
</comment>
<dbReference type="EMBL" id="AE000512">
    <property type="protein sequence ID" value="AAD35611.1"/>
    <property type="molecule type" value="Genomic_DNA"/>
</dbReference>
<dbReference type="PIR" id="D72366">
    <property type="entry name" value="D72366"/>
</dbReference>
<dbReference type="RefSeq" id="NP_228336.1">
    <property type="nucleotide sequence ID" value="NC_000853.1"/>
</dbReference>
<dbReference type="PDB" id="4Y91">
    <property type="method" value="X-ray"/>
    <property type="resolution" value="2.66 A"/>
    <property type="chains" value="A/B/C/D/E/F/G/H/I/J/K/L=1-92"/>
</dbReference>
<dbReference type="PDBsum" id="4Y91"/>
<dbReference type="SMR" id="Q9WYZ6"/>
<dbReference type="FunCoup" id="Q9WYZ6">
    <property type="interactions" value="76"/>
</dbReference>
<dbReference type="STRING" id="243274.TM_0526"/>
<dbReference type="PaxDb" id="243274-THEMA_02045"/>
<dbReference type="EnsemblBacteria" id="AAD35611">
    <property type="protein sequence ID" value="AAD35611"/>
    <property type="gene ID" value="TM_0526"/>
</dbReference>
<dbReference type="KEGG" id="tma:TM0526"/>
<dbReference type="PATRIC" id="fig|243274.5.peg.534"/>
<dbReference type="eggNOG" id="COG1923">
    <property type="taxonomic scope" value="Bacteria"/>
</dbReference>
<dbReference type="InParanoid" id="Q9WYZ6"/>
<dbReference type="OrthoDB" id="9799751at2"/>
<dbReference type="EvolutionaryTrace" id="Q9WYZ6"/>
<dbReference type="Proteomes" id="UP000008183">
    <property type="component" value="Chromosome"/>
</dbReference>
<dbReference type="GO" id="GO:0005829">
    <property type="term" value="C:cytosol"/>
    <property type="evidence" value="ECO:0000318"/>
    <property type="project" value="GO_Central"/>
</dbReference>
<dbReference type="GO" id="GO:0003723">
    <property type="term" value="F:RNA binding"/>
    <property type="evidence" value="ECO:0000318"/>
    <property type="project" value="GO_Central"/>
</dbReference>
<dbReference type="GO" id="GO:0006355">
    <property type="term" value="P:regulation of DNA-templated transcription"/>
    <property type="evidence" value="ECO:0007669"/>
    <property type="project" value="InterPro"/>
</dbReference>
<dbReference type="GO" id="GO:0043487">
    <property type="term" value="P:regulation of RNA stability"/>
    <property type="evidence" value="ECO:0000318"/>
    <property type="project" value="GO_Central"/>
</dbReference>
<dbReference type="GO" id="GO:0045974">
    <property type="term" value="P:regulation of translation, ncRNA-mediated"/>
    <property type="evidence" value="ECO:0000318"/>
    <property type="project" value="GO_Central"/>
</dbReference>
<dbReference type="CDD" id="cd01716">
    <property type="entry name" value="Hfq"/>
    <property type="match status" value="1"/>
</dbReference>
<dbReference type="FunFam" id="2.30.30.100:FF:000012">
    <property type="entry name" value="RNA-binding protein Hfq"/>
    <property type="match status" value="1"/>
</dbReference>
<dbReference type="Gene3D" id="2.30.30.100">
    <property type="match status" value="1"/>
</dbReference>
<dbReference type="HAMAP" id="MF_00436">
    <property type="entry name" value="Hfq"/>
    <property type="match status" value="1"/>
</dbReference>
<dbReference type="InterPro" id="IPR005001">
    <property type="entry name" value="Hfq"/>
</dbReference>
<dbReference type="InterPro" id="IPR010920">
    <property type="entry name" value="LSM_dom_sf"/>
</dbReference>
<dbReference type="InterPro" id="IPR047575">
    <property type="entry name" value="Sm"/>
</dbReference>
<dbReference type="NCBIfam" id="TIGR02383">
    <property type="entry name" value="Hfq"/>
    <property type="match status" value="1"/>
</dbReference>
<dbReference type="NCBIfam" id="NF001602">
    <property type="entry name" value="PRK00395.1"/>
    <property type="match status" value="1"/>
</dbReference>
<dbReference type="PANTHER" id="PTHR34772">
    <property type="entry name" value="RNA-BINDING PROTEIN HFQ"/>
    <property type="match status" value="1"/>
</dbReference>
<dbReference type="PANTHER" id="PTHR34772:SF1">
    <property type="entry name" value="RNA-BINDING PROTEIN HFQ"/>
    <property type="match status" value="1"/>
</dbReference>
<dbReference type="Pfam" id="PF17209">
    <property type="entry name" value="Hfq"/>
    <property type="match status" value="1"/>
</dbReference>
<dbReference type="SUPFAM" id="SSF50182">
    <property type="entry name" value="Sm-like ribonucleoproteins"/>
    <property type="match status" value="1"/>
</dbReference>
<dbReference type="PROSITE" id="PS52002">
    <property type="entry name" value="SM"/>
    <property type="match status" value="1"/>
</dbReference>
<gene>
    <name evidence="1" type="primary">hfq</name>
    <name type="ordered locus">TM_0526</name>
</gene>
<sequence length="92" mass="10516">MALAEKFNLQDRFLNHLRVNKIEVKVYLVNGFQTKGFIRSFDSYTVLLESGNQQSLIYKHAISTIIPSSYVMLMPKKQETAQEAETSENEGS</sequence>
<feature type="chain" id="PRO_0000095664" description="RNA-binding protein Hfq">
    <location>
        <begin position="1"/>
        <end position="92"/>
    </location>
</feature>
<feature type="domain" description="Sm" evidence="2">
    <location>
        <begin position="11"/>
        <end position="71"/>
    </location>
</feature>
<feature type="helix" evidence="3">
    <location>
        <begin position="9"/>
        <end position="19"/>
    </location>
</feature>
<feature type="strand" evidence="3">
    <location>
        <begin position="23"/>
        <end position="28"/>
    </location>
</feature>
<feature type="strand" evidence="3">
    <location>
        <begin position="33"/>
        <end position="41"/>
    </location>
</feature>
<feature type="strand" evidence="3">
    <location>
        <begin position="43"/>
        <end position="50"/>
    </location>
</feature>
<feature type="strand" evidence="3">
    <location>
        <begin position="53"/>
        <end position="58"/>
    </location>
</feature>
<feature type="helix" evidence="3">
    <location>
        <begin position="59"/>
        <end position="61"/>
    </location>
</feature>
<feature type="strand" evidence="3">
    <location>
        <begin position="62"/>
        <end position="69"/>
    </location>
</feature>